<dbReference type="EMBL" id="S36676">
    <property type="protein sequence ID" value="AAB22171.1"/>
    <property type="molecule type" value="mRNA"/>
</dbReference>
<dbReference type="EMBL" id="AF132744">
    <property type="protein sequence ID" value="AAD31028.1"/>
    <property type="molecule type" value="Genomic_DNA"/>
</dbReference>
<dbReference type="EMBL" id="CH466596">
    <property type="protein sequence ID" value="EDL12536.1"/>
    <property type="molecule type" value="Genomic_DNA"/>
</dbReference>
<dbReference type="EMBL" id="AL669869">
    <property type="status" value="NOT_ANNOTATED_CDS"/>
    <property type="molecule type" value="Genomic_DNA"/>
</dbReference>
<dbReference type="EMBL" id="CR933731">
    <property type="status" value="NOT_ANNOTATED_CDS"/>
    <property type="molecule type" value="Genomic_DNA"/>
</dbReference>
<dbReference type="EMBL" id="BC014811">
    <property type="protein sequence ID" value="AAH14811.1"/>
    <property type="molecule type" value="mRNA"/>
</dbReference>
<dbReference type="CCDS" id="CCDS24936.1"/>
<dbReference type="PIR" id="JX0209">
    <property type="entry name" value="JX0209"/>
</dbReference>
<dbReference type="RefSeq" id="NP_034926.1">
    <property type="nucleotide sequence ID" value="NM_010796.4"/>
</dbReference>
<dbReference type="SMR" id="P49300"/>
<dbReference type="FunCoup" id="P49300">
    <property type="interactions" value="54"/>
</dbReference>
<dbReference type="STRING" id="10090.ENSMUSP00000000327"/>
<dbReference type="GlyCosmos" id="P49300">
    <property type="glycosylation" value="2 sites, No reported glycans"/>
</dbReference>
<dbReference type="GlyGen" id="P49300">
    <property type="glycosylation" value="2 sites"/>
</dbReference>
<dbReference type="iPTMnet" id="P49300"/>
<dbReference type="PhosphoSitePlus" id="P49300"/>
<dbReference type="PaxDb" id="10090-ENSMUSP00000000327"/>
<dbReference type="ProteomicsDB" id="283275"/>
<dbReference type="DNASU" id="17312"/>
<dbReference type="Ensembl" id="ENSMUST00000102571.10">
    <property type="protein sequence ID" value="ENSMUSP00000099631.4"/>
    <property type="gene ID" value="ENSMUSG00000000318.17"/>
</dbReference>
<dbReference type="GeneID" id="17312"/>
<dbReference type="KEGG" id="mmu:17312"/>
<dbReference type="UCSC" id="uc007jtx.2">
    <property type="organism name" value="mouse"/>
</dbReference>
<dbReference type="AGR" id="MGI:96975"/>
<dbReference type="CTD" id="10462"/>
<dbReference type="MGI" id="MGI:96975">
    <property type="gene designation" value="Clec10a"/>
</dbReference>
<dbReference type="VEuPathDB" id="HostDB:ENSMUSG00000000318"/>
<dbReference type="eggNOG" id="KOG4297">
    <property type="taxonomic scope" value="Eukaryota"/>
</dbReference>
<dbReference type="GeneTree" id="ENSGT00940000162036"/>
<dbReference type="HOGENOM" id="CLU_049894_2_0_1"/>
<dbReference type="InParanoid" id="P49300"/>
<dbReference type="PhylomeDB" id="P49300"/>
<dbReference type="BioGRID-ORCS" id="17312">
    <property type="hits" value="2 hits in 79 CRISPR screens"/>
</dbReference>
<dbReference type="ChiTaRS" id="Clec10a">
    <property type="organism name" value="mouse"/>
</dbReference>
<dbReference type="PRO" id="PR:P49300"/>
<dbReference type="Proteomes" id="UP000000589">
    <property type="component" value="Chromosome 11"/>
</dbReference>
<dbReference type="RNAct" id="P49300">
    <property type="molecule type" value="protein"/>
</dbReference>
<dbReference type="Bgee" id="ENSMUSG00000000318">
    <property type="expression patterns" value="Expressed in stroma of bone marrow and 112 other cell types or tissues"/>
</dbReference>
<dbReference type="ExpressionAtlas" id="P49300">
    <property type="expression patterns" value="baseline and differential"/>
</dbReference>
<dbReference type="GO" id="GO:0016020">
    <property type="term" value="C:membrane"/>
    <property type="evidence" value="ECO:0007669"/>
    <property type="project" value="UniProtKB-SubCell"/>
</dbReference>
<dbReference type="GO" id="GO:0030246">
    <property type="term" value="F:carbohydrate binding"/>
    <property type="evidence" value="ECO:0007669"/>
    <property type="project" value="UniProtKB-KW"/>
</dbReference>
<dbReference type="GO" id="GO:0002248">
    <property type="term" value="P:connective tissue replacement involved in inflammatory response wound healing"/>
    <property type="evidence" value="ECO:0000315"/>
    <property type="project" value="MGI"/>
</dbReference>
<dbReference type="CDD" id="cd03590">
    <property type="entry name" value="CLECT_DC-SIGN_like"/>
    <property type="match status" value="1"/>
</dbReference>
<dbReference type="FunFam" id="3.10.100.10:FF:000041">
    <property type="entry name" value="Asialoglycoprotein receptor 1"/>
    <property type="match status" value="1"/>
</dbReference>
<dbReference type="Gene3D" id="1.10.287.1490">
    <property type="match status" value="1"/>
</dbReference>
<dbReference type="Gene3D" id="3.10.100.10">
    <property type="entry name" value="Mannose-Binding Protein A, subunit A"/>
    <property type="match status" value="1"/>
</dbReference>
<dbReference type="InterPro" id="IPR001304">
    <property type="entry name" value="C-type_lectin-like"/>
</dbReference>
<dbReference type="InterPro" id="IPR016186">
    <property type="entry name" value="C-type_lectin-like/link_sf"/>
</dbReference>
<dbReference type="InterPro" id="IPR050111">
    <property type="entry name" value="C-type_lectin/snaclec_domain"/>
</dbReference>
<dbReference type="InterPro" id="IPR018378">
    <property type="entry name" value="C-type_lectin_CS"/>
</dbReference>
<dbReference type="InterPro" id="IPR033989">
    <property type="entry name" value="CD209-like_CTLD"/>
</dbReference>
<dbReference type="InterPro" id="IPR016187">
    <property type="entry name" value="CTDL_fold"/>
</dbReference>
<dbReference type="PANTHER" id="PTHR22803">
    <property type="entry name" value="MANNOSE, PHOSPHOLIPASE, LECTIN RECEPTOR RELATED"/>
    <property type="match status" value="1"/>
</dbReference>
<dbReference type="Pfam" id="PF00059">
    <property type="entry name" value="Lectin_C"/>
    <property type="match status" value="1"/>
</dbReference>
<dbReference type="Pfam" id="PF03954">
    <property type="entry name" value="Lectin_N"/>
    <property type="match status" value="2"/>
</dbReference>
<dbReference type="SMART" id="SM00034">
    <property type="entry name" value="CLECT"/>
    <property type="match status" value="1"/>
</dbReference>
<dbReference type="SUPFAM" id="SSF56436">
    <property type="entry name" value="C-type lectin-like"/>
    <property type="match status" value="1"/>
</dbReference>
<dbReference type="PROSITE" id="PS00615">
    <property type="entry name" value="C_TYPE_LECTIN_1"/>
    <property type="match status" value="1"/>
</dbReference>
<dbReference type="PROSITE" id="PS50041">
    <property type="entry name" value="C_TYPE_LECTIN_2"/>
    <property type="match status" value="1"/>
</dbReference>
<evidence type="ECO:0000255" key="1"/>
<evidence type="ECO:0000255" key="2">
    <source>
        <dbReference type="PROSITE-ProRule" id="PRU00040"/>
    </source>
</evidence>
<evidence type="ECO:0000269" key="3">
    <source>
    </source>
</evidence>
<evidence type="ECO:0000269" key="4">
    <source>
    </source>
</evidence>
<evidence type="ECO:0000269" key="5">
    <source>
    </source>
</evidence>
<evidence type="ECO:0000305" key="6"/>
<gene>
    <name type="primary">Clec10a</name>
    <name type="synonym">Mgl</name>
    <name type="synonym">Mgl1</name>
</gene>
<feature type="chain" id="PRO_0000046657" description="C-type lectin domain family 10 member A">
    <location>
        <begin position="1"/>
        <end position="304"/>
    </location>
</feature>
<feature type="topological domain" description="Cytoplasmic" evidence="1">
    <location>
        <begin position="1"/>
        <end position="35"/>
    </location>
</feature>
<feature type="transmembrane region" description="Helical; Signal-anchor for type II membrane protein" evidence="1">
    <location>
        <begin position="36"/>
        <end position="56"/>
    </location>
</feature>
<feature type="topological domain" description="Extracellular" evidence="1">
    <location>
        <begin position="57"/>
        <end position="304"/>
    </location>
</feature>
<feature type="domain" description="C-type lectin" evidence="2">
    <location>
        <begin position="172"/>
        <end position="298"/>
    </location>
</feature>
<feature type="glycosylation site" description="N-linked (GlcNAc...) asparagine" evidence="1">
    <location>
        <position position="74"/>
    </location>
</feature>
<feature type="glycosylation site" description="N-linked (GlcNAc...) asparagine" evidence="1">
    <location>
        <position position="166"/>
    </location>
</feature>
<feature type="disulfide bond" evidence="2">
    <location>
        <begin position="173"/>
        <end position="184"/>
    </location>
</feature>
<feature type="disulfide bond" evidence="2">
    <location>
        <begin position="201"/>
        <end position="296"/>
    </location>
</feature>
<feature type="disulfide bond" evidence="2">
    <location>
        <begin position="274"/>
        <end position="288"/>
    </location>
</feature>
<feature type="sequence conflict" description="In Ref. 5; AAH14811." evidence="6" ref="5">
    <original>T</original>
    <variation>I</variation>
    <location>
        <position position="71"/>
    </location>
</feature>
<feature type="sequence conflict" description="In Ref. 5; AAH14811." evidence="6" ref="5">
    <original>V</original>
    <variation>L</variation>
    <location>
        <position position="128"/>
    </location>
</feature>
<name>CLC10_MOUSE</name>
<reference key="1">
    <citation type="journal article" date="1992" name="J. Biochem.">
        <title>Molecular cloning and expression of cDNA encoding a galactose/N-acetylgalactosamine-specific lectin on mouse tumoricidal macrophages.</title>
        <authorList>
            <person name="Sato M."/>
            <person name="Kawakamyi K."/>
            <person name="Osawa T."/>
            <person name="Toyoshima S."/>
        </authorList>
    </citation>
    <scope>NUCLEOTIDE SEQUENCE [MRNA]</scope>
    <source>
        <strain>C3H/HeN</strain>
    </source>
</reference>
<reference key="2">
    <citation type="journal article" date="1999" name="Immunogenetics">
        <title>Genomic structure and chromosomal location of the mouse macrophage C-type lectin gene.</title>
        <authorList>
            <person name="Tsuiji M."/>
            <person name="Fujimori M."/>
            <person name="Seldin M.F."/>
            <person name="Taketo M.M."/>
            <person name="Irimura T."/>
        </authorList>
    </citation>
    <scope>NUCLEOTIDE SEQUENCE [GENOMIC DNA]</scope>
    <source>
        <strain>129/SvJ</strain>
    </source>
</reference>
<reference key="3">
    <citation type="submission" date="2005-07" db="EMBL/GenBank/DDBJ databases">
        <authorList>
            <person name="Mural R.J."/>
            <person name="Adams M.D."/>
            <person name="Myers E.W."/>
            <person name="Smith H.O."/>
            <person name="Venter J.C."/>
        </authorList>
    </citation>
    <scope>NUCLEOTIDE SEQUENCE [LARGE SCALE GENOMIC DNA]</scope>
</reference>
<reference key="4">
    <citation type="submission" date="2009-01" db="EMBL/GenBank/DDBJ databases">
        <authorList>
            <consortium name="The mouse genome sequencing consortium"/>
        </authorList>
    </citation>
    <scope>NUCLEOTIDE SEQUENCE [LARGE SCALE GENOMIC DNA]</scope>
    <source>
        <strain>C57BL/6J</strain>
    </source>
</reference>
<reference key="5">
    <citation type="journal article" date="2004" name="Genome Res.">
        <title>The status, quality, and expansion of the NIH full-length cDNA project: the Mammalian Gene Collection (MGC).</title>
        <authorList>
            <consortium name="The MGC Project Team"/>
        </authorList>
    </citation>
    <scope>NUCLEOTIDE SEQUENCE [LARGE SCALE MRNA]</scope>
    <source>
        <strain>FVB/N</strain>
        <tissue>Mammary tumor</tissue>
    </source>
</reference>
<reference key="6">
    <citation type="journal article" date="1988" name="J. Biochem.">
        <title>Purification and characterization of a lectin-like molecule specific for galactose/N-acetyl-galactosamine from tumoricidal macrophages.</title>
        <authorList>
            <person name="Oda S."/>
            <person name="Sato M."/>
            <person name="Toyoshima S."/>
            <person name="Osawa T."/>
        </authorList>
    </citation>
    <scope>PROTEIN SEQUENCE OF 102-120 AND 137-151</scope>
    <source>
        <strain>C3H/HeN</strain>
    </source>
</reference>
<reference key="7">
    <citation type="journal article" date="2002" name="J. Biol. Chem.">
        <title>Molecular cloning and characterization of a novel mouse macrophage C-type lectin, mMGL2, which has a distinct carbohydrate specificity from mMGL1.</title>
        <authorList>
            <person name="Tsuiji M."/>
            <person name="Fujimori M."/>
            <person name="Ohashi Y."/>
            <person name="Higashi N."/>
            <person name="Onami T.M."/>
            <person name="Hedrick S.M."/>
            <person name="Irimura T."/>
        </authorList>
    </citation>
    <scope>TISSUE SPECIFICITY</scope>
    <scope>DEVELOPMENTAL STAGE</scope>
</reference>
<reference key="8">
    <citation type="journal article" date="2004" name="J. Biol. Chem.">
        <title>Identification of sialoadhesin as a dominant lymph node counter-receptor for mouse macrophage galactose-type C-type lectin 1.</title>
        <authorList>
            <person name="Kumamoto Y."/>
            <person name="Higashi N."/>
            <person name="Denda-Nagai K."/>
            <person name="Tsuiji M."/>
            <person name="Sato K."/>
            <person name="Crocker P.R."/>
            <person name="Irimura T."/>
        </authorList>
    </citation>
    <scope>INTERACTION WITH SIGLEC1</scope>
    <scope>TISSUE SPECIFICITY</scope>
</reference>
<reference key="9">
    <citation type="journal article" date="2009" name="J. Exp. Med.">
        <title>MGL1 promotes adipose tissue inflammation and insulin resistance by regulating 7/4hi monocytes in obesity.</title>
        <authorList>
            <person name="Westcott D.J."/>
            <person name="Delproposto J.B."/>
            <person name="Geletka L.M."/>
            <person name="Wang T."/>
            <person name="Singer K."/>
            <person name="Saltiel A.R."/>
            <person name="Lumeng C.N."/>
        </authorList>
    </citation>
    <scope>FUNCTION</scope>
</reference>
<organism>
    <name type="scientific">Mus musculus</name>
    <name type="common">Mouse</name>
    <dbReference type="NCBI Taxonomy" id="10090"/>
    <lineage>
        <taxon>Eukaryota</taxon>
        <taxon>Metazoa</taxon>
        <taxon>Chordata</taxon>
        <taxon>Craniata</taxon>
        <taxon>Vertebrata</taxon>
        <taxon>Euteleostomi</taxon>
        <taxon>Mammalia</taxon>
        <taxon>Eutheria</taxon>
        <taxon>Euarchontoglires</taxon>
        <taxon>Glires</taxon>
        <taxon>Rodentia</taxon>
        <taxon>Myomorpha</taxon>
        <taxon>Muroidea</taxon>
        <taxon>Muridae</taxon>
        <taxon>Murinae</taxon>
        <taxon>Mus</taxon>
        <taxon>Mus</taxon>
    </lineage>
</organism>
<proteinExistence type="evidence at protein level"/>
<comment type="function">
    <text evidence="5">Recognizes terminal galactose and N-acetylgalactosamine units. May participate in the interaction between tumoricidal macrophages and tumor cells. Plays a role in the recruitment of inflammatory monocytes to adipose tissue in diet-induced obesity.</text>
</comment>
<comment type="subunit">
    <text evidence="4">Homooligomer. Interacts with SIGLEC1, which may act as a counter-receptor for CLEC10A in lymph node.</text>
</comment>
<comment type="subcellular location">
    <subcellularLocation>
        <location>Membrane</location>
        <topology>Single-pass type II membrane protein</topology>
    </subcellularLocation>
</comment>
<comment type="tissue specificity">
    <text evidence="3 4">Detected in lymph node in the subcapsular sinus, interfollicular regions, T and B-cell boundary and in the areas surrounding high endothelial venules (at protein level). Expressed on the surface of activated macrophages. Expressed in heart, lung, testis, skeletal muscle, spleen, brain, kidney and thymus. Expressed in P388, RAW 264.7 and M1 cell lines.</text>
</comment>
<comment type="developmental stage">
    <text evidence="3">Detected in 7 dpc, 11 dpc, 15 dpc and 17 dpc embryo.</text>
</comment>
<comment type="online information" name="Functional Glycomics Gateway - Glycan Binding">
    <link uri="http://www.functionalglycomics.org/glycomics/GBPServlet?&amp;operationType=view&amp;cbpId=cbp_mou_Ctlect_158"/>
    <text>MGL1</text>
</comment>
<accession>P49300</accession>
<accession>Q549F6</accession>
<accession>Q91YT3</accession>
<sequence>MIYENLQNSRIEEKTQEPGKAPSQSFLWRILSWTHLLLFSLGLSLLLLVVVSVIGSQNSQLRRDLGTLRATLDNTTSKIKAEFQSLDSRADSFEKGISSLKVDVEDHRQELQAGRDLSQKVTSLESTVEKREQALKTDLSDLTDHVQQLRKDLKALTCQLANLKNNGSEVACCPLHWTEHEGSCYWFSESEKSWPEADKYCRLENSHLVVVNSLEEQNFLQNRLANVVSWIGLTDQNGPWRWVDGTDFEKGFKNWAPLQPDNWFGHGLGGGEDCAHITTGGPWNDDVCQRTFRWICEMKLAKES</sequence>
<protein>
    <recommendedName>
        <fullName>C-type lectin domain family 10 member A</fullName>
    </recommendedName>
    <alternativeName>
        <fullName>MMGL</fullName>
    </alternativeName>
    <alternativeName>
        <fullName>Macrophage asialoglycoprotein-binding protein 1</fullName>
        <shortName>M-ASGP-BP-1</shortName>
    </alternativeName>
    <alternativeName>
        <fullName>Macrophage galactose/N-acetylgalactosamine-specific lectin</fullName>
    </alternativeName>
</protein>
<keyword id="KW-0106">Calcium</keyword>
<keyword id="KW-0903">Direct protein sequencing</keyword>
<keyword id="KW-1015">Disulfide bond</keyword>
<keyword id="KW-0325">Glycoprotein</keyword>
<keyword id="KW-0430">Lectin</keyword>
<keyword id="KW-0472">Membrane</keyword>
<keyword id="KW-1185">Reference proteome</keyword>
<keyword id="KW-0735">Signal-anchor</keyword>
<keyword id="KW-0812">Transmembrane</keyword>
<keyword id="KW-1133">Transmembrane helix</keyword>